<comment type="function">
    <text evidence="5 6">Acts as a transcriptional regulator that recruits coactivator IFH1 to the promoters of ribosomal protein genes (PubMed:15616568, PubMed:8164651). Recruited to ribosomal gene promoters by RAP1 (PubMed:15616568, PubMed:8164651).</text>
</comment>
<comment type="interaction">
    <interactant intactId="EBI-6897">
        <id>P39521</id>
    </interactant>
    <interactant intactId="EBI-9578">
        <id>P38930</id>
        <label>CKB2</label>
    </interactant>
    <organismsDiffer>false</organismsDiffer>
    <experiments>2</experiments>
</comment>
<comment type="subcellular location">
    <subcellularLocation>
        <location evidence="7">Nucleus</location>
    </subcellularLocation>
</comment>
<comment type="miscellaneous">
    <text evidence="4">Present with 639 molecules/cell in log phase SD medium.</text>
</comment>
<keyword id="KW-0238">DNA-binding</keyword>
<keyword id="KW-0539">Nucleus</keyword>
<keyword id="KW-0597">Phosphoprotein</keyword>
<keyword id="KW-1185">Reference proteome</keyword>
<keyword id="KW-0804">Transcription</keyword>
<keyword id="KW-0805">Transcription regulation</keyword>
<sequence length="936" mass="103502">MDGEMAIIESSNHVGTSSPTTETQFTIDSSALKDQETKESITNSPTSEVPIETKLPKSSDIVTEEKHPQNTTTDIENEVENPVTDDNGNLKLELPDNLDNADFSKLLEFDAKNDEALFNSNELLSHTMDPVNNIDLTHDHSREVSSKEDINIEPVNPDEDEREKTQDNTAAVKTEGIRNSEDTSIQKDEPTADAIYTDVHKLSVNKDTETLPTLVDEKNNMLHMRNNSITPIMFQQHELVGQPPQNTVTENNSTDAETTQRKLSEPIDASLPLPNEQPTIFAYARLDFQSFTFYVQTLHAIIGRRSENDFSHKVDVNLGPSKSISRRHAQIFYNFGTGRFELSIIGKNGAFVDDIFVEKGNTVPLRNKTKIQIGQIPFQFILPEQERNDDSKSPENADIAESEINTRNLKKNEPKSKKKITTGAKPKKAQTKPAVKKEKKPPKIPKKVYTLEEIPVEYRTKPTVSYSAMLTTCIRKYSTAKGMSLSEIYAGIRELFPYYKYCPDGWQSSVRHNLSLNKSFRKVSKEGKGWLWGLDEEYIAERERQKKKQSEIAVAKAQAAQLKLEQQQHKLQQVPQRGKKDIVSQRSNVNARKQNISQTLAANRAASNRKNTASDNQRTMKYLQEQLVILTRDRKGLSKQVIAAILTQALAMTINQVTQAAKNKGITGNPLTALMDKNPQHLNLILAAAVNAATAKVTKGEVKQLVNPETTAAAALAAKAQHSKPIRQPIVQTPHVPDRPPSQLSASASSHPNNYLHDKQPGSFDPSSLSRFFQPRQNARATSSVAATSVPAAASQNVDAQPKPKPAQDNDLESESGTSSSSSSSSESGSESDSGSDDGSASGSGDNSSTSSESESESDSGSEVDEKNNKNEKIDSESIKNNESKDDIPSKDENSSNDNREISKTDEEGHDSKRRKVSEDINEGITEVNVSLEEKL</sequence>
<proteinExistence type="evidence at protein level"/>
<accession>P39521</accession>
<accession>D6W4A2</accession>
<feature type="chain" id="PRO_0000091901" description="Pre-rRNA-processing protein FHL1">
    <location>
        <begin position="1"/>
        <end position="936"/>
    </location>
</feature>
<feature type="domain" description="FHA" evidence="1">
    <location>
        <begin position="300"/>
        <end position="357"/>
    </location>
</feature>
<feature type="DNA-binding region" description="Fork-head" evidence="2">
    <location>
        <begin position="460"/>
        <end position="552"/>
    </location>
</feature>
<feature type="region of interest" description="Disordered" evidence="3">
    <location>
        <begin position="1"/>
        <end position="90"/>
    </location>
</feature>
<feature type="region of interest" description="Disordered" evidence="3">
    <location>
        <begin position="139"/>
        <end position="169"/>
    </location>
</feature>
<feature type="region of interest" description="Disordered" evidence="3">
    <location>
        <begin position="243"/>
        <end position="270"/>
    </location>
</feature>
<feature type="region of interest" description="Disordered" evidence="3">
    <location>
        <begin position="384"/>
        <end position="442"/>
    </location>
</feature>
<feature type="region of interest" description="Disordered" evidence="3">
    <location>
        <begin position="718"/>
        <end position="936"/>
    </location>
</feature>
<feature type="compositionally biased region" description="Polar residues" evidence="3">
    <location>
        <begin position="9"/>
        <end position="29"/>
    </location>
</feature>
<feature type="compositionally biased region" description="Basic and acidic residues" evidence="3">
    <location>
        <begin position="139"/>
        <end position="150"/>
    </location>
</feature>
<feature type="compositionally biased region" description="Polar residues" evidence="3">
    <location>
        <begin position="243"/>
        <end position="257"/>
    </location>
</feature>
<feature type="compositionally biased region" description="Basic and acidic residues" evidence="3">
    <location>
        <begin position="384"/>
        <end position="395"/>
    </location>
</feature>
<feature type="compositionally biased region" description="Basic residues" evidence="3">
    <location>
        <begin position="416"/>
        <end position="430"/>
    </location>
</feature>
<feature type="compositionally biased region" description="Polar residues" evidence="3">
    <location>
        <begin position="742"/>
        <end position="753"/>
    </location>
</feature>
<feature type="compositionally biased region" description="Polar residues" evidence="3">
    <location>
        <begin position="765"/>
        <end position="777"/>
    </location>
</feature>
<feature type="compositionally biased region" description="Low complexity" evidence="3">
    <location>
        <begin position="779"/>
        <end position="795"/>
    </location>
</feature>
<feature type="compositionally biased region" description="Low complexity" evidence="3">
    <location>
        <begin position="815"/>
        <end position="853"/>
    </location>
</feature>
<feature type="compositionally biased region" description="Acidic residues" evidence="3">
    <location>
        <begin position="854"/>
        <end position="863"/>
    </location>
</feature>
<feature type="compositionally biased region" description="Basic and acidic residues" evidence="3">
    <location>
        <begin position="864"/>
        <end position="911"/>
    </location>
</feature>
<feature type="modified residue" description="Phosphoserine" evidence="8 9">
    <location>
        <position position="44"/>
    </location>
</feature>
<feature type="modified residue" description="Phosphoserine" evidence="11">
    <location>
        <position position="228"/>
    </location>
</feature>
<feature type="modified residue" description="Phosphothreonine" evidence="11">
    <location>
        <position position="230"/>
    </location>
</feature>
<feature type="modified residue" description="Phosphothreonine" evidence="11">
    <location>
        <position position="247"/>
    </location>
</feature>
<feature type="modified residue" description="Phosphoserine" evidence="10 11">
    <location>
        <position position="264"/>
    </location>
</feature>
<gene>
    <name type="primary">FHL1</name>
    <name type="ordered locus">YPR104C</name>
    <name type="ORF">P8283.15</name>
</gene>
<reference key="1">
    <citation type="journal article" date="1994" name="Mol. Cell. Biol.">
        <title>Suppression of yeast RNA polymerase III mutations by FHL1, a gene coding for a fork head protein involved in rRNA processing.</title>
        <authorList>
            <person name="Hermann-Ledenmat S."/>
            <person name="Werner M."/>
            <person name="Sentenac A."/>
            <person name="Thuriaux P."/>
        </authorList>
    </citation>
    <scope>NUCLEOTIDE SEQUENCE [GENOMIC DNA]</scope>
    <scope>FUNCTION</scope>
    <source>
        <strain>ATCC 28383 / FL100 / VTT C-80102</strain>
    </source>
</reference>
<reference key="2">
    <citation type="journal article" date="1997" name="Nature">
        <title>The nucleotide sequence of Saccharomyces cerevisiae chromosome XVI.</title>
        <authorList>
            <person name="Bussey H."/>
            <person name="Storms R.K."/>
            <person name="Ahmed A."/>
            <person name="Albermann K."/>
            <person name="Allen E."/>
            <person name="Ansorge W."/>
            <person name="Araujo R."/>
            <person name="Aparicio A."/>
            <person name="Barrell B.G."/>
            <person name="Badcock K."/>
            <person name="Benes V."/>
            <person name="Botstein D."/>
            <person name="Bowman S."/>
            <person name="Brueckner M."/>
            <person name="Carpenter J."/>
            <person name="Cherry J.M."/>
            <person name="Chung E."/>
            <person name="Churcher C.M."/>
            <person name="Coster F."/>
            <person name="Davis K."/>
            <person name="Davis R.W."/>
            <person name="Dietrich F.S."/>
            <person name="Delius H."/>
            <person name="DiPaolo T."/>
            <person name="Dubois E."/>
            <person name="Duesterhoeft A."/>
            <person name="Duncan M."/>
            <person name="Floeth M."/>
            <person name="Fortin N."/>
            <person name="Friesen J.D."/>
            <person name="Fritz C."/>
            <person name="Goffeau A."/>
            <person name="Hall J."/>
            <person name="Hebling U."/>
            <person name="Heumann K."/>
            <person name="Hilbert H."/>
            <person name="Hillier L.W."/>
            <person name="Hunicke-Smith S."/>
            <person name="Hyman R.W."/>
            <person name="Johnston M."/>
            <person name="Kalman S."/>
            <person name="Kleine K."/>
            <person name="Komp C."/>
            <person name="Kurdi O."/>
            <person name="Lashkari D."/>
            <person name="Lew H."/>
            <person name="Lin A."/>
            <person name="Lin D."/>
            <person name="Louis E.J."/>
            <person name="Marathe R."/>
            <person name="Messenguy F."/>
            <person name="Mewes H.-W."/>
            <person name="Mirtipati S."/>
            <person name="Moestl D."/>
            <person name="Mueller-Auer S."/>
            <person name="Namath A."/>
            <person name="Nentwich U."/>
            <person name="Oefner P."/>
            <person name="Pearson D."/>
            <person name="Petel F.X."/>
            <person name="Pohl T.M."/>
            <person name="Purnelle B."/>
            <person name="Rajandream M.A."/>
            <person name="Rechmann S."/>
            <person name="Rieger M."/>
            <person name="Riles L."/>
            <person name="Roberts D."/>
            <person name="Schaefer M."/>
            <person name="Scharfe M."/>
            <person name="Scherens B."/>
            <person name="Schramm S."/>
            <person name="Schroeder M."/>
            <person name="Sdicu A.-M."/>
            <person name="Tettelin H."/>
            <person name="Urrestarazu L.A."/>
            <person name="Ushinsky S."/>
            <person name="Vierendeels F."/>
            <person name="Vissers S."/>
            <person name="Voss H."/>
            <person name="Walsh S.V."/>
            <person name="Wambutt R."/>
            <person name="Wang Y."/>
            <person name="Wedler E."/>
            <person name="Wedler H."/>
            <person name="Winnett E."/>
            <person name="Zhong W.-W."/>
            <person name="Zollner A."/>
            <person name="Vo D.H."/>
            <person name="Hani J."/>
        </authorList>
    </citation>
    <scope>NUCLEOTIDE SEQUENCE [LARGE SCALE GENOMIC DNA]</scope>
    <source>
        <strain>ATCC 204508 / S288c</strain>
    </source>
</reference>
<reference key="3">
    <citation type="journal article" date="2014" name="G3 (Bethesda)">
        <title>The reference genome sequence of Saccharomyces cerevisiae: Then and now.</title>
        <authorList>
            <person name="Engel S.R."/>
            <person name="Dietrich F.S."/>
            <person name="Fisk D.G."/>
            <person name="Binkley G."/>
            <person name="Balakrishnan R."/>
            <person name="Costanzo M.C."/>
            <person name="Dwight S.S."/>
            <person name="Hitz B.C."/>
            <person name="Karra K."/>
            <person name="Nash R.S."/>
            <person name="Weng S."/>
            <person name="Wong E.D."/>
            <person name="Lloyd P."/>
            <person name="Skrzypek M.S."/>
            <person name="Miyasato S.R."/>
            <person name="Simison M."/>
            <person name="Cherry J.M."/>
        </authorList>
    </citation>
    <scope>GENOME REANNOTATION</scope>
    <source>
        <strain>ATCC 204508 / S288c</strain>
    </source>
</reference>
<reference key="4">
    <citation type="journal article" date="2003" name="Nature">
        <title>Global analysis of protein expression in yeast.</title>
        <authorList>
            <person name="Ghaemmaghami S."/>
            <person name="Huh W.-K."/>
            <person name="Bower K."/>
            <person name="Howson R.W."/>
            <person name="Belle A."/>
            <person name="Dephoure N."/>
            <person name="O'Shea E.K."/>
            <person name="Weissman J.S."/>
        </authorList>
    </citation>
    <scope>LEVEL OF PROTEIN EXPRESSION [LARGE SCALE ANALYSIS]</scope>
</reference>
<reference key="5">
    <citation type="journal article" date="2004" name="Nature">
        <title>The transcription factor Ifh1 is a key regulator of yeast ribosomal protein genes.</title>
        <authorList>
            <person name="Wade J.T."/>
            <person name="Hall D.B."/>
            <person name="Struhl K."/>
        </authorList>
    </citation>
    <scope>FUNCTION</scope>
</reference>
<reference key="6">
    <citation type="journal article" date="2005" name="Mol. Cell. Proteomics">
        <title>Quantitative phosphoproteomics applied to the yeast pheromone signaling pathway.</title>
        <authorList>
            <person name="Gruhler A."/>
            <person name="Olsen J.V."/>
            <person name="Mohammed S."/>
            <person name="Mortensen P."/>
            <person name="Faergeman N.J."/>
            <person name="Mann M."/>
            <person name="Jensen O.N."/>
        </authorList>
    </citation>
    <scope>PHOSPHORYLATION [LARGE SCALE ANALYSIS] AT SER-44</scope>
    <scope>IDENTIFICATION BY MASS SPECTROMETRY [LARGE SCALE ANALYSIS]</scope>
    <source>
        <strain>YAL6B</strain>
    </source>
</reference>
<reference key="7">
    <citation type="journal article" date="2007" name="J. Proteome Res.">
        <title>Large-scale phosphorylation analysis of alpha-factor-arrested Saccharomyces cerevisiae.</title>
        <authorList>
            <person name="Li X."/>
            <person name="Gerber S.A."/>
            <person name="Rudner A.D."/>
            <person name="Beausoleil S.A."/>
            <person name="Haas W."/>
            <person name="Villen J."/>
            <person name="Elias J.E."/>
            <person name="Gygi S.P."/>
        </authorList>
    </citation>
    <scope>PHOSPHORYLATION [LARGE SCALE ANALYSIS] AT SER-44</scope>
    <scope>IDENTIFICATION BY MASS SPECTROMETRY [LARGE SCALE ANALYSIS]</scope>
    <source>
        <strain>ADR376</strain>
    </source>
</reference>
<reference key="8">
    <citation type="journal article" date="2008" name="Mol. Cell. Proteomics">
        <title>A multidimensional chromatography technology for in-depth phosphoproteome analysis.</title>
        <authorList>
            <person name="Albuquerque C.P."/>
            <person name="Smolka M.B."/>
            <person name="Payne S.H."/>
            <person name="Bafna V."/>
            <person name="Eng J."/>
            <person name="Zhou H."/>
        </authorList>
    </citation>
    <scope>PHOSPHORYLATION [LARGE SCALE ANALYSIS] AT SER-264</scope>
    <scope>IDENTIFICATION BY MASS SPECTROMETRY [LARGE SCALE ANALYSIS]</scope>
</reference>
<reference key="9">
    <citation type="journal article" date="2009" name="Science">
        <title>Global analysis of Cdk1 substrate phosphorylation sites provides insights into evolution.</title>
        <authorList>
            <person name="Holt L.J."/>
            <person name="Tuch B.B."/>
            <person name="Villen J."/>
            <person name="Johnson A.D."/>
            <person name="Gygi S.P."/>
            <person name="Morgan D.O."/>
        </authorList>
    </citation>
    <scope>PHOSPHORYLATION [LARGE SCALE ANALYSIS] AT SER-228; THR-230; THR-247 AND SER-264</scope>
    <scope>IDENTIFICATION BY MASS SPECTROMETRY [LARGE SCALE ANALYSIS]</scope>
</reference>
<protein>
    <recommendedName>
        <fullName>Pre-rRNA-processing protein FHL1</fullName>
    </recommendedName>
</protein>
<organism>
    <name type="scientific">Saccharomyces cerevisiae (strain ATCC 204508 / S288c)</name>
    <name type="common">Baker's yeast</name>
    <dbReference type="NCBI Taxonomy" id="559292"/>
    <lineage>
        <taxon>Eukaryota</taxon>
        <taxon>Fungi</taxon>
        <taxon>Dikarya</taxon>
        <taxon>Ascomycota</taxon>
        <taxon>Saccharomycotina</taxon>
        <taxon>Saccharomycetes</taxon>
        <taxon>Saccharomycetales</taxon>
        <taxon>Saccharomycetaceae</taxon>
        <taxon>Saccharomyces</taxon>
    </lineage>
</organism>
<dbReference type="EMBL" id="Z28348">
    <property type="protein sequence ID" value="CAA82202.1"/>
    <property type="molecule type" value="Genomic_DNA"/>
</dbReference>
<dbReference type="EMBL" id="U32445">
    <property type="protein sequence ID" value="AAB68074.1"/>
    <property type="molecule type" value="Genomic_DNA"/>
</dbReference>
<dbReference type="EMBL" id="BK006949">
    <property type="protein sequence ID" value="DAA11518.1"/>
    <property type="molecule type" value="Genomic_DNA"/>
</dbReference>
<dbReference type="PIR" id="S43738">
    <property type="entry name" value="S43738"/>
</dbReference>
<dbReference type="RefSeq" id="NP_015429.1">
    <property type="nucleotide sequence ID" value="NM_001184201.1"/>
</dbReference>
<dbReference type="SMR" id="P39521"/>
<dbReference type="BioGRID" id="36270">
    <property type="interactions" value="213"/>
</dbReference>
<dbReference type="DIP" id="DIP-3821N"/>
<dbReference type="FunCoup" id="P39521">
    <property type="interactions" value="1919"/>
</dbReference>
<dbReference type="IntAct" id="P39521">
    <property type="interactions" value="11"/>
</dbReference>
<dbReference type="MINT" id="P39521"/>
<dbReference type="STRING" id="4932.YPR104C"/>
<dbReference type="CarbonylDB" id="P39521"/>
<dbReference type="iPTMnet" id="P39521"/>
<dbReference type="PaxDb" id="4932-YPR104C"/>
<dbReference type="PeptideAtlas" id="P39521"/>
<dbReference type="EnsemblFungi" id="YPR104C_mRNA">
    <property type="protein sequence ID" value="YPR104C"/>
    <property type="gene ID" value="YPR104C"/>
</dbReference>
<dbReference type="GeneID" id="856219"/>
<dbReference type="KEGG" id="sce:YPR104C"/>
<dbReference type="AGR" id="SGD:S000006308"/>
<dbReference type="SGD" id="S000006308">
    <property type="gene designation" value="FHL1"/>
</dbReference>
<dbReference type="VEuPathDB" id="FungiDB:YPR104C"/>
<dbReference type="eggNOG" id="KOG2294">
    <property type="taxonomic scope" value="Eukaryota"/>
</dbReference>
<dbReference type="HOGENOM" id="CLU_003924_0_0_1"/>
<dbReference type="InParanoid" id="P39521"/>
<dbReference type="OMA" id="IAVQRPM"/>
<dbReference type="OrthoDB" id="5954824at2759"/>
<dbReference type="BioCyc" id="YEAST:G3O-34244-MONOMER"/>
<dbReference type="BioGRID-ORCS" id="856219">
    <property type="hits" value="11 hits in 13 CRISPR screens"/>
</dbReference>
<dbReference type="PRO" id="PR:P39521"/>
<dbReference type="Proteomes" id="UP000002311">
    <property type="component" value="Chromosome XVI"/>
</dbReference>
<dbReference type="RNAct" id="P39521">
    <property type="molecule type" value="protein"/>
</dbReference>
<dbReference type="GO" id="GO:0000785">
    <property type="term" value="C:chromatin"/>
    <property type="evidence" value="ECO:0000314"/>
    <property type="project" value="SGD"/>
</dbReference>
<dbReference type="GO" id="GO:0005730">
    <property type="term" value="C:nucleolus"/>
    <property type="evidence" value="ECO:0000314"/>
    <property type="project" value="SGD"/>
</dbReference>
<dbReference type="GO" id="GO:0005634">
    <property type="term" value="C:nucleus"/>
    <property type="evidence" value="ECO:0000314"/>
    <property type="project" value="SGD"/>
</dbReference>
<dbReference type="GO" id="GO:0003700">
    <property type="term" value="F:DNA-binding transcription factor activity"/>
    <property type="evidence" value="ECO:0007669"/>
    <property type="project" value="InterPro"/>
</dbReference>
<dbReference type="GO" id="GO:0000978">
    <property type="term" value="F:RNA polymerase II cis-regulatory region sequence-specific DNA binding"/>
    <property type="evidence" value="ECO:0000314"/>
    <property type="project" value="SGD"/>
</dbReference>
<dbReference type="GO" id="GO:0043565">
    <property type="term" value="F:sequence-specific DNA binding"/>
    <property type="evidence" value="ECO:0007005"/>
    <property type="project" value="SGD"/>
</dbReference>
<dbReference type="GO" id="GO:0001223">
    <property type="term" value="F:transcription coactivator binding"/>
    <property type="evidence" value="ECO:0000353"/>
    <property type="project" value="SGD"/>
</dbReference>
<dbReference type="GO" id="GO:0001222">
    <property type="term" value="F:transcription corepressor binding"/>
    <property type="evidence" value="ECO:0000353"/>
    <property type="project" value="SGD"/>
</dbReference>
<dbReference type="GO" id="GO:0010688">
    <property type="term" value="P:negative regulation of ribosomal protein gene transcription by RNA polymerase II"/>
    <property type="evidence" value="ECO:0000315"/>
    <property type="project" value="SGD"/>
</dbReference>
<dbReference type="GO" id="GO:0060963">
    <property type="term" value="P:positive regulation of ribosomal protein gene transcription by RNA polymerase II"/>
    <property type="evidence" value="ECO:0000315"/>
    <property type="project" value="SGD"/>
</dbReference>
<dbReference type="GO" id="GO:0006355">
    <property type="term" value="P:regulation of DNA-templated transcription"/>
    <property type="evidence" value="ECO:0000318"/>
    <property type="project" value="GO_Central"/>
</dbReference>
<dbReference type="CDD" id="cd00059">
    <property type="entry name" value="FH_FOX"/>
    <property type="match status" value="1"/>
</dbReference>
<dbReference type="CDD" id="cd22701">
    <property type="entry name" value="FHA_FKH1-like"/>
    <property type="match status" value="1"/>
</dbReference>
<dbReference type="FunFam" id="2.60.200.20:FF:000039">
    <property type="entry name" value="Forkhead transcription factor Fkh1/2"/>
    <property type="match status" value="1"/>
</dbReference>
<dbReference type="Gene3D" id="2.60.200.20">
    <property type="match status" value="1"/>
</dbReference>
<dbReference type="Gene3D" id="1.10.10.10">
    <property type="entry name" value="Winged helix-like DNA-binding domain superfamily/Winged helix DNA-binding domain"/>
    <property type="match status" value="1"/>
</dbReference>
<dbReference type="InterPro" id="IPR000253">
    <property type="entry name" value="FHA_dom"/>
</dbReference>
<dbReference type="InterPro" id="IPR045178">
    <property type="entry name" value="Fhl1/FHA1"/>
</dbReference>
<dbReference type="InterPro" id="IPR001766">
    <property type="entry name" value="Fork_head_dom"/>
</dbReference>
<dbReference type="InterPro" id="IPR008984">
    <property type="entry name" value="SMAD_FHA_dom_sf"/>
</dbReference>
<dbReference type="InterPro" id="IPR018122">
    <property type="entry name" value="TF_fork_head_CS_1"/>
</dbReference>
<dbReference type="InterPro" id="IPR030456">
    <property type="entry name" value="TF_fork_head_CS_2"/>
</dbReference>
<dbReference type="InterPro" id="IPR036388">
    <property type="entry name" value="WH-like_DNA-bd_sf"/>
</dbReference>
<dbReference type="InterPro" id="IPR036390">
    <property type="entry name" value="WH_DNA-bd_sf"/>
</dbReference>
<dbReference type="PANTHER" id="PTHR21712">
    <property type="entry name" value="PRE-RRNA-PROCESSING PROTEIN FHL1"/>
    <property type="match status" value="1"/>
</dbReference>
<dbReference type="PANTHER" id="PTHR21712:SF29">
    <property type="entry name" value="PRE-RRNA-PROCESSING PROTEIN FHL1"/>
    <property type="match status" value="1"/>
</dbReference>
<dbReference type="Pfam" id="PF00498">
    <property type="entry name" value="FHA"/>
    <property type="match status" value="1"/>
</dbReference>
<dbReference type="Pfam" id="PF00250">
    <property type="entry name" value="Forkhead"/>
    <property type="match status" value="1"/>
</dbReference>
<dbReference type="PRINTS" id="PR00053">
    <property type="entry name" value="FORKHEAD"/>
</dbReference>
<dbReference type="SMART" id="SM00339">
    <property type="entry name" value="FH"/>
    <property type="match status" value="1"/>
</dbReference>
<dbReference type="SMART" id="SM00240">
    <property type="entry name" value="FHA"/>
    <property type="match status" value="1"/>
</dbReference>
<dbReference type="SUPFAM" id="SSF49879">
    <property type="entry name" value="SMAD/FHA domain"/>
    <property type="match status" value="1"/>
</dbReference>
<dbReference type="SUPFAM" id="SSF46785">
    <property type="entry name" value="Winged helix' DNA-binding domain"/>
    <property type="match status" value="1"/>
</dbReference>
<dbReference type="PROSITE" id="PS50006">
    <property type="entry name" value="FHA_DOMAIN"/>
    <property type="match status" value="1"/>
</dbReference>
<dbReference type="PROSITE" id="PS00657">
    <property type="entry name" value="FORK_HEAD_1"/>
    <property type="match status" value="1"/>
</dbReference>
<dbReference type="PROSITE" id="PS00658">
    <property type="entry name" value="FORK_HEAD_2"/>
    <property type="match status" value="1"/>
</dbReference>
<dbReference type="PROSITE" id="PS50039">
    <property type="entry name" value="FORK_HEAD_3"/>
    <property type="match status" value="1"/>
</dbReference>
<evidence type="ECO:0000255" key="1">
    <source>
        <dbReference type="PROSITE-ProRule" id="PRU00086"/>
    </source>
</evidence>
<evidence type="ECO:0000255" key="2">
    <source>
        <dbReference type="PROSITE-ProRule" id="PRU00089"/>
    </source>
</evidence>
<evidence type="ECO:0000256" key="3">
    <source>
        <dbReference type="SAM" id="MobiDB-lite"/>
    </source>
</evidence>
<evidence type="ECO:0000269" key="4">
    <source>
    </source>
</evidence>
<evidence type="ECO:0000269" key="5">
    <source>
    </source>
</evidence>
<evidence type="ECO:0000269" key="6">
    <source>
    </source>
</evidence>
<evidence type="ECO:0000305" key="7"/>
<evidence type="ECO:0007744" key="8">
    <source>
    </source>
</evidence>
<evidence type="ECO:0007744" key="9">
    <source>
    </source>
</evidence>
<evidence type="ECO:0007744" key="10">
    <source>
    </source>
</evidence>
<evidence type="ECO:0007744" key="11">
    <source>
    </source>
</evidence>
<name>FKHL1_YEAST</name>